<name>HPRT_METTH</name>
<sequence length="193" mass="21264">MLDKLKESLRNSPVIKKGEYDYFVNPVTDGIPLTEPELLEEVAEEIVRRFRPEADKIICIEAMGIHHATVLSLKTGIPFVVVRKRRYGLPGEVAVHQMTGYSEGELYINGVDSGDRVVVIDDVVSTGGTLLAVLEALREMDVDVRDVITVIDKGEGSRVVRERTGFTVKSLVKVDVIDGRVKVEDIPAGGPHD</sequence>
<comment type="function">
    <text evidence="1">Catalyzes a salvage reaction resulting in the formation of IMP that is energically less costly than de novo synthesis.</text>
</comment>
<comment type="catalytic activity">
    <reaction evidence="1">
        <text>IMP + diphosphate = hypoxanthine + 5-phospho-alpha-D-ribose 1-diphosphate</text>
        <dbReference type="Rhea" id="RHEA:17973"/>
        <dbReference type="ChEBI" id="CHEBI:17368"/>
        <dbReference type="ChEBI" id="CHEBI:33019"/>
        <dbReference type="ChEBI" id="CHEBI:58017"/>
        <dbReference type="ChEBI" id="CHEBI:58053"/>
        <dbReference type="EC" id="2.4.2.8"/>
    </reaction>
</comment>
<comment type="catalytic activity">
    <reaction evidence="1">
        <text>GMP + diphosphate = guanine + 5-phospho-alpha-D-ribose 1-diphosphate</text>
        <dbReference type="Rhea" id="RHEA:25424"/>
        <dbReference type="ChEBI" id="CHEBI:16235"/>
        <dbReference type="ChEBI" id="CHEBI:33019"/>
        <dbReference type="ChEBI" id="CHEBI:58017"/>
        <dbReference type="ChEBI" id="CHEBI:58115"/>
        <dbReference type="EC" id="2.4.2.8"/>
    </reaction>
</comment>
<comment type="pathway">
    <text evidence="1">Purine metabolism; IMP biosynthesis via salvage pathway; IMP from hypoxanthine: step 1/1.</text>
</comment>
<comment type="subunit">
    <text evidence="1">Homodimer.</text>
</comment>
<comment type="subcellular location">
    <subcellularLocation>
        <location evidence="1">Cytoplasm</location>
    </subcellularLocation>
</comment>
<comment type="similarity">
    <text evidence="1">Belongs to the purine/pyrimidine phosphoribosyltransferase family. Archaeal HPRT subfamily.</text>
</comment>
<comment type="sequence caution" evidence="2">
    <conflict type="erroneous initiation">
        <sequence resource="EMBL-CDS" id="AAB85798"/>
    </conflict>
    <text>Extended N-terminus.</text>
</comment>
<proteinExistence type="inferred from homology"/>
<protein>
    <recommendedName>
        <fullName evidence="1">Hypoxanthine/guanine phosphoribosyltransferase</fullName>
        <shortName evidence="1">HGPRTase</shortName>
        <ecNumber evidence="1">2.4.2.8</ecNumber>
    </recommendedName>
</protein>
<accession>O27375</accession>
<evidence type="ECO:0000255" key="1">
    <source>
        <dbReference type="HAMAP-Rule" id="MF_01467"/>
    </source>
</evidence>
<evidence type="ECO:0000305" key="2"/>
<gene>
    <name evidence="1" type="primary">hpt</name>
    <name type="ordered locus">MTH_1320</name>
</gene>
<organism>
    <name type="scientific">Methanothermobacter thermautotrophicus (strain ATCC 29096 / DSM 1053 / JCM 10044 / NBRC 100330 / Delta H)</name>
    <name type="common">Methanobacterium thermoautotrophicum</name>
    <dbReference type="NCBI Taxonomy" id="187420"/>
    <lineage>
        <taxon>Archaea</taxon>
        <taxon>Methanobacteriati</taxon>
        <taxon>Methanobacteriota</taxon>
        <taxon>Methanomada group</taxon>
        <taxon>Methanobacteria</taxon>
        <taxon>Methanobacteriales</taxon>
        <taxon>Methanobacteriaceae</taxon>
        <taxon>Methanothermobacter</taxon>
    </lineage>
</organism>
<feature type="chain" id="PRO_0000149501" description="Hypoxanthine/guanine phosphoribosyltransferase">
    <location>
        <begin position="1"/>
        <end position="193"/>
    </location>
</feature>
<keyword id="KW-0963">Cytoplasm</keyword>
<keyword id="KW-0328">Glycosyltransferase</keyword>
<keyword id="KW-0660">Purine salvage</keyword>
<keyword id="KW-1185">Reference proteome</keyword>
<keyword id="KW-0808">Transferase</keyword>
<dbReference type="EC" id="2.4.2.8" evidence="1"/>
<dbReference type="EMBL" id="AE000666">
    <property type="protein sequence ID" value="AAB85798.1"/>
    <property type="status" value="ALT_INIT"/>
    <property type="molecule type" value="Genomic_DNA"/>
</dbReference>
<dbReference type="PIR" id="E69042">
    <property type="entry name" value="E69042"/>
</dbReference>
<dbReference type="RefSeq" id="WP_048061024.1">
    <property type="nucleotide sequence ID" value="NC_000916.1"/>
</dbReference>
<dbReference type="SMR" id="O27375"/>
<dbReference type="FunCoup" id="O27375">
    <property type="interactions" value="50"/>
</dbReference>
<dbReference type="STRING" id="187420.MTH_1320"/>
<dbReference type="PaxDb" id="187420-MTH_1320"/>
<dbReference type="EnsemblBacteria" id="AAB85798">
    <property type="protein sequence ID" value="AAB85798"/>
    <property type="gene ID" value="MTH_1320"/>
</dbReference>
<dbReference type="GeneID" id="82297758"/>
<dbReference type="KEGG" id="mth:MTH_1320"/>
<dbReference type="PATRIC" id="fig|187420.15.peg.1289"/>
<dbReference type="HOGENOM" id="CLU_126376_0_0_2"/>
<dbReference type="InParanoid" id="O27375"/>
<dbReference type="UniPathway" id="UPA00591">
    <property type="reaction ID" value="UER00648"/>
</dbReference>
<dbReference type="Proteomes" id="UP000005223">
    <property type="component" value="Chromosome"/>
</dbReference>
<dbReference type="GO" id="GO:0005737">
    <property type="term" value="C:cytoplasm"/>
    <property type="evidence" value="ECO:0007669"/>
    <property type="project" value="UniProtKB-SubCell"/>
</dbReference>
<dbReference type="GO" id="GO:0052657">
    <property type="term" value="F:guanine phosphoribosyltransferase activity"/>
    <property type="evidence" value="ECO:0007669"/>
    <property type="project" value="RHEA"/>
</dbReference>
<dbReference type="GO" id="GO:0004422">
    <property type="term" value="F:hypoxanthine phosphoribosyltransferase activity"/>
    <property type="evidence" value="ECO:0007669"/>
    <property type="project" value="UniProtKB-UniRule"/>
</dbReference>
<dbReference type="GO" id="GO:0032264">
    <property type="term" value="P:IMP salvage"/>
    <property type="evidence" value="ECO:0007669"/>
    <property type="project" value="UniProtKB-UniRule"/>
</dbReference>
<dbReference type="GO" id="GO:0006166">
    <property type="term" value="P:purine ribonucleoside salvage"/>
    <property type="evidence" value="ECO:0007669"/>
    <property type="project" value="UniProtKB-KW"/>
</dbReference>
<dbReference type="CDD" id="cd06223">
    <property type="entry name" value="PRTases_typeI"/>
    <property type="match status" value="1"/>
</dbReference>
<dbReference type="Gene3D" id="3.40.50.2020">
    <property type="match status" value="1"/>
</dbReference>
<dbReference type="HAMAP" id="MF_01467">
    <property type="entry name" value="Hypx_phosphoribosyltr"/>
    <property type="match status" value="1"/>
</dbReference>
<dbReference type="InterPro" id="IPR026597">
    <property type="entry name" value="HGPRTase-like"/>
</dbReference>
<dbReference type="InterPro" id="IPR000836">
    <property type="entry name" value="PRibTrfase_dom"/>
</dbReference>
<dbReference type="InterPro" id="IPR029057">
    <property type="entry name" value="PRTase-like"/>
</dbReference>
<dbReference type="InterPro" id="IPR050118">
    <property type="entry name" value="Pur/Pyrimidine_PRTase"/>
</dbReference>
<dbReference type="NCBIfam" id="NF040646">
    <property type="entry name" value="HPT_Archaea"/>
    <property type="match status" value="1"/>
</dbReference>
<dbReference type="NCBIfam" id="NF002635">
    <property type="entry name" value="PRK02304.1-4"/>
    <property type="match status" value="1"/>
</dbReference>
<dbReference type="PANTHER" id="PTHR43864">
    <property type="entry name" value="HYPOXANTHINE/GUANINE PHOSPHORIBOSYLTRANSFERASE"/>
    <property type="match status" value="1"/>
</dbReference>
<dbReference type="PANTHER" id="PTHR43864:SF1">
    <property type="entry name" value="XANTHINE PHOSPHORIBOSYLTRANSFERASE"/>
    <property type="match status" value="1"/>
</dbReference>
<dbReference type="Pfam" id="PF00156">
    <property type="entry name" value="Pribosyltran"/>
    <property type="match status" value="1"/>
</dbReference>
<dbReference type="SUPFAM" id="SSF53271">
    <property type="entry name" value="PRTase-like"/>
    <property type="match status" value="1"/>
</dbReference>
<dbReference type="PROSITE" id="PS00103">
    <property type="entry name" value="PUR_PYR_PR_TRANSFER"/>
    <property type="match status" value="1"/>
</dbReference>
<reference key="1">
    <citation type="journal article" date="1997" name="J. Bacteriol.">
        <title>Complete genome sequence of Methanobacterium thermoautotrophicum deltaH: functional analysis and comparative genomics.</title>
        <authorList>
            <person name="Smith D.R."/>
            <person name="Doucette-Stamm L.A."/>
            <person name="Deloughery C."/>
            <person name="Lee H.-M."/>
            <person name="Dubois J."/>
            <person name="Aldredge T."/>
            <person name="Bashirzadeh R."/>
            <person name="Blakely D."/>
            <person name="Cook R."/>
            <person name="Gilbert K."/>
            <person name="Harrison D."/>
            <person name="Hoang L."/>
            <person name="Keagle P."/>
            <person name="Lumm W."/>
            <person name="Pothier B."/>
            <person name="Qiu D."/>
            <person name="Spadafora R."/>
            <person name="Vicare R."/>
            <person name="Wang Y."/>
            <person name="Wierzbowski J."/>
            <person name="Gibson R."/>
            <person name="Jiwani N."/>
            <person name="Caruso A."/>
            <person name="Bush D."/>
            <person name="Safer H."/>
            <person name="Patwell D."/>
            <person name="Prabhakar S."/>
            <person name="McDougall S."/>
            <person name="Shimer G."/>
            <person name="Goyal A."/>
            <person name="Pietrovski S."/>
            <person name="Church G.M."/>
            <person name="Daniels C.J."/>
            <person name="Mao J.-I."/>
            <person name="Rice P."/>
            <person name="Noelling J."/>
            <person name="Reeve J.N."/>
        </authorList>
    </citation>
    <scope>NUCLEOTIDE SEQUENCE [LARGE SCALE GENOMIC DNA]</scope>
    <source>
        <strain>ATCC 29096 / DSM 1053 / JCM 10044 / NBRC 100330 / Delta H</strain>
    </source>
</reference>